<sequence>KKDGYLVDKTGCKYTCWKLGENKYCNRECTWKHRGGNYGYCYGFGCYCEGLADSTQTWPLPNKSC</sequence>
<proteinExistence type="evidence at protein level"/>
<feature type="chain" id="PRO_0000461093" description="Toxin Cbo5">
    <location>
        <begin position="1"/>
        <end position="65"/>
    </location>
</feature>
<feature type="domain" description="LCN-type CS-alpha/beta" evidence="1">
    <location>
        <begin position="2"/>
        <end position="65"/>
    </location>
</feature>
<feature type="disulfide bond" evidence="1">
    <location>
        <begin position="12"/>
        <end position="65"/>
    </location>
</feature>
<feature type="disulfide bond" evidence="1">
    <location>
        <begin position="16"/>
        <end position="41"/>
    </location>
</feature>
<feature type="disulfide bond" evidence="1">
    <location>
        <begin position="25"/>
        <end position="46"/>
    </location>
</feature>
<feature type="disulfide bond" evidence="1">
    <location>
        <begin position="29"/>
        <end position="48"/>
    </location>
</feature>
<keyword id="KW-0903">Direct protein sequencing</keyword>
<keyword id="KW-1015">Disulfide bond</keyword>
<keyword id="KW-0964">Secreted</keyword>
<keyword id="KW-0800">Toxin</keyword>
<organism>
    <name type="scientific">Centruroides bonito</name>
    <name type="common">Scorpion</name>
    <dbReference type="NCBI Taxonomy" id="3035065"/>
    <lineage>
        <taxon>Eukaryota</taxon>
        <taxon>Metazoa</taxon>
        <taxon>Ecdysozoa</taxon>
        <taxon>Arthropoda</taxon>
        <taxon>Chelicerata</taxon>
        <taxon>Arachnida</taxon>
        <taxon>Scorpiones</taxon>
        <taxon>Buthida</taxon>
        <taxon>Buthoidea</taxon>
        <taxon>Buthidae</taxon>
        <taxon>Centruroides</taxon>
    </lineage>
</organism>
<accession>C0HMA7</accession>
<comment type="function">
    <text evidence="2 4">A probable toxin that has no activity on the tested sodium channels (when tested at 200 nM) and is not toxic to mice, crickets or sweet water shrimps (PubMed:38535792). It resembles Beta toxins that bind voltage-independently at site-4 of sodium channels and shift the voltage of activation toward more negative potentials, thereby affecting sodium channel activation and promoting spontaneous and repetitive firing (Probable).</text>
</comment>
<comment type="subcellular location">
    <subcellularLocation>
        <location evidence="2">Secreted</location>
    </subcellularLocation>
</comment>
<comment type="tissue specificity">
    <text evidence="5">Expressed by the venom gland.</text>
</comment>
<comment type="domain">
    <text evidence="4">Has the structural arrangement of an alpha-helix connected to antiparallel beta-sheets by disulfide bonds (CS-alpha/beta).</text>
</comment>
<comment type="mass spectrometry"/>
<comment type="miscellaneous">
    <text evidence="2">Negative results: does not modify the currents of the human voltage-gated sodium channels Nav1.1/SCN1A, Nav1.2/SCN2A, Nav1.3/SCN3A, Nav 1.4/SCN4A, Nav1.5/SCN5A, Nav1.6/SCN8A and Nav1.7/SCN9A.</text>
</comment>
<comment type="similarity">
    <text evidence="4">Belongs to the long (4 C-C) scorpion toxin superfamily. Sodium channel inhibitor family. Beta subfamily.</text>
</comment>
<dbReference type="SMR" id="C0HMA7"/>
<dbReference type="GO" id="GO:0005576">
    <property type="term" value="C:extracellular region"/>
    <property type="evidence" value="ECO:0007669"/>
    <property type="project" value="UniProtKB-SubCell"/>
</dbReference>
<dbReference type="GO" id="GO:0019871">
    <property type="term" value="F:sodium channel inhibitor activity"/>
    <property type="evidence" value="ECO:0007669"/>
    <property type="project" value="InterPro"/>
</dbReference>
<dbReference type="GO" id="GO:0090729">
    <property type="term" value="F:toxin activity"/>
    <property type="evidence" value="ECO:0007669"/>
    <property type="project" value="UniProtKB-KW"/>
</dbReference>
<dbReference type="GO" id="GO:0006952">
    <property type="term" value="P:defense response"/>
    <property type="evidence" value="ECO:0007669"/>
    <property type="project" value="InterPro"/>
</dbReference>
<dbReference type="CDD" id="cd23106">
    <property type="entry name" value="neurotoxins_LC_scorpion"/>
    <property type="match status" value="1"/>
</dbReference>
<dbReference type="FunFam" id="3.30.30.10:FF:000002">
    <property type="entry name" value="Alpha-like toxin BmK-M1"/>
    <property type="match status" value="1"/>
</dbReference>
<dbReference type="Gene3D" id="3.30.30.10">
    <property type="entry name" value="Knottin, scorpion toxin-like"/>
    <property type="match status" value="1"/>
</dbReference>
<dbReference type="InterPro" id="IPR044062">
    <property type="entry name" value="LCN-type_CS_alpha_beta_dom"/>
</dbReference>
<dbReference type="InterPro" id="IPR003614">
    <property type="entry name" value="Scorpion_toxin-like"/>
</dbReference>
<dbReference type="InterPro" id="IPR036574">
    <property type="entry name" value="Scorpion_toxin-like_sf"/>
</dbReference>
<dbReference type="InterPro" id="IPR018218">
    <property type="entry name" value="Scorpion_toxinL"/>
</dbReference>
<dbReference type="InterPro" id="IPR002061">
    <property type="entry name" value="Scorpion_toxinL/defensin"/>
</dbReference>
<dbReference type="Pfam" id="PF00537">
    <property type="entry name" value="Toxin_3"/>
    <property type="match status" value="1"/>
</dbReference>
<dbReference type="PRINTS" id="PR00285">
    <property type="entry name" value="SCORPNTOXIN"/>
</dbReference>
<dbReference type="SMART" id="SM00505">
    <property type="entry name" value="Knot1"/>
    <property type="match status" value="1"/>
</dbReference>
<dbReference type="SUPFAM" id="SSF57095">
    <property type="entry name" value="Scorpion toxin-like"/>
    <property type="match status" value="1"/>
</dbReference>
<dbReference type="PROSITE" id="PS51863">
    <property type="entry name" value="LCN_CSAB"/>
    <property type="match status" value="1"/>
</dbReference>
<protein>
    <recommendedName>
        <fullName evidence="4">Toxin Cbo5</fullName>
        <shortName evidence="3">Cbo5</shortName>
    </recommendedName>
</protein>
<evidence type="ECO:0000255" key="1">
    <source>
        <dbReference type="PROSITE-ProRule" id="PRU01210"/>
    </source>
</evidence>
<evidence type="ECO:0000269" key="2">
    <source>
    </source>
</evidence>
<evidence type="ECO:0000303" key="3">
    <source>
    </source>
</evidence>
<evidence type="ECO:0000305" key="4"/>
<evidence type="ECO:0000305" key="5">
    <source>
    </source>
</evidence>
<reference evidence="4" key="1">
    <citation type="journal article" date="2024" name="Toxins">
        <title>Characterization of Sodium Channel Peptides Obtained from the Venom of the Scorpion Centruroides bonito.</title>
        <authorList>
            <person name="Restano-Cassulini R."/>
            <person name="Olamendi-Portugal T."/>
            <person name="Riano-Umbarila L."/>
            <person name="Zamudio F.Z."/>
            <person name="Delgado-Prudencio G."/>
            <person name="Becerril B."/>
            <person name="Possani L.D."/>
        </authorList>
    </citation>
    <scope>PROTEIN SEQUENCE</scope>
    <scope>FUNCTION</scope>
    <scope>SUBCELLULAR LOCATION</scope>
    <scope>TISSUE SPECIFICITY</scope>
    <scope>MASS SPECTROMETRY</scope>
    <source>
        <tissue evidence="3">Venom</tissue>
    </source>
</reference>
<name>SCX5_CENBO</name>